<comment type="function">
    <text evidence="1">Catalyzes the methylation of C-1 in cobalt-precorrin-5B to form cobalt-precorrin-6A.</text>
</comment>
<comment type="catalytic activity">
    <reaction evidence="1">
        <text>Co-precorrin-5B + S-adenosyl-L-methionine = Co-precorrin-6A + S-adenosyl-L-homocysteine</text>
        <dbReference type="Rhea" id="RHEA:26285"/>
        <dbReference type="ChEBI" id="CHEBI:57856"/>
        <dbReference type="ChEBI" id="CHEBI:59789"/>
        <dbReference type="ChEBI" id="CHEBI:60063"/>
        <dbReference type="ChEBI" id="CHEBI:60064"/>
        <dbReference type="EC" id="2.1.1.195"/>
    </reaction>
</comment>
<comment type="pathway">
    <text evidence="1">Cofactor biosynthesis; adenosylcobalamin biosynthesis; cob(II)yrinate a,c-diamide from sirohydrochlorin (anaerobic route): step 6/10.</text>
</comment>
<comment type="similarity">
    <text evidence="1">Belongs to the CbiD family.</text>
</comment>
<feature type="chain" id="PRO_1000133741" description="Cobalt-precorrin-5B C(1)-methyltransferase">
    <location>
        <begin position="1"/>
        <end position="364"/>
    </location>
</feature>
<name>CBID_PSEPW</name>
<organism>
    <name type="scientific">Pseudomonas putida (strain W619)</name>
    <dbReference type="NCBI Taxonomy" id="390235"/>
    <lineage>
        <taxon>Bacteria</taxon>
        <taxon>Pseudomonadati</taxon>
        <taxon>Pseudomonadota</taxon>
        <taxon>Gammaproteobacteria</taxon>
        <taxon>Pseudomonadales</taxon>
        <taxon>Pseudomonadaceae</taxon>
        <taxon>Pseudomonas</taxon>
    </lineage>
</organism>
<gene>
    <name evidence="1" type="primary">cbiD</name>
    <name type="ordered locus">PputW619_4621</name>
</gene>
<protein>
    <recommendedName>
        <fullName evidence="1">Cobalt-precorrin-5B C(1)-methyltransferase</fullName>
        <ecNumber evidence="1">2.1.1.195</ecNumber>
    </recommendedName>
    <alternativeName>
        <fullName evidence="1">Cobalt-precorrin-6A synthase</fullName>
    </alternativeName>
</protein>
<accession>B1J5X5</accession>
<evidence type="ECO:0000255" key="1">
    <source>
        <dbReference type="HAMAP-Rule" id="MF_00787"/>
    </source>
</evidence>
<sequence length="364" mass="38032">MREETREQPAPLRSGLTTGSCATATSLAAARLLLTGVSTDAVSITLPKGKVVQMRLEFCRREDERAEAGTLKDAGDDPDVTHGALLYSQVRLQDEPGIRFVAGVGVGTVTRPGLVLAVGEPAINPVPRRMISEHLQQLADDCAYRGGFEVTVNVKGGEQLALKTMNPRLGILGGLSILGTSGIVRPFSCAAYIASIHQGIDVAHTNGYTHIAACTGNASEDTMRRVYGLPEIALIEMGDFVGAVLKHLRKVPVPRLSLCGGFGKISKLAAGHMDLHSRHSSIDLPQLAGWAADIGADADLQAAIMAANTSQQALALAHAAGIALGDAVCAHALAFARSVVPAQVQVEVFAIDRQGGIVGKAGMQ</sequence>
<proteinExistence type="inferred from homology"/>
<reference key="1">
    <citation type="submission" date="2008-02" db="EMBL/GenBank/DDBJ databases">
        <title>Complete sequence of Pseudomonas putida W619.</title>
        <authorList>
            <person name="Copeland A."/>
            <person name="Lucas S."/>
            <person name="Lapidus A."/>
            <person name="Barry K."/>
            <person name="Detter J.C."/>
            <person name="Glavina del Rio T."/>
            <person name="Dalin E."/>
            <person name="Tice H."/>
            <person name="Pitluck S."/>
            <person name="Chain P."/>
            <person name="Malfatti S."/>
            <person name="Shin M."/>
            <person name="Vergez L."/>
            <person name="Schmutz J."/>
            <person name="Larimer F."/>
            <person name="Land M."/>
            <person name="Hauser L."/>
            <person name="Kyrpides N."/>
            <person name="Kim E."/>
            <person name="Taghavi S."/>
            <person name="Vangronsveld D."/>
            <person name="van der Lelie D."/>
            <person name="Richardson P."/>
        </authorList>
    </citation>
    <scope>NUCLEOTIDE SEQUENCE [LARGE SCALE GENOMIC DNA]</scope>
    <source>
        <strain>W619</strain>
    </source>
</reference>
<keyword id="KW-0169">Cobalamin biosynthesis</keyword>
<keyword id="KW-0489">Methyltransferase</keyword>
<keyword id="KW-0949">S-adenosyl-L-methionine</keyword>
<keyword id="KW-0808">Transferase</keyword>
<dbReference type="EC" id="2.1.1.195" evidence="1"/>
<dbReference type="EMBL" id="CP000949">
    <property type="protein sequence ID" value="ACA75101.1"/>
    <property type="molecule type" value="Genomic_DNA"/>
</dbReference>
<dbReference type="SMR" id="B1J5X5"/>
<dbReference type="STRING" id="390235.PputW619_4621"/>
<dbReference type="KEGG" id="ppw:PputW619_4621"/>
<dbReference type="eggNOG" id="COG1903">
    <property type="taxonomic scope" value="Bacteria"/>
</dbReference>
<dbReference type="HOGENOM" id="CLU_041273_0_0_6"/>
<dbReference type="OrthoDB" id="6439987at2"/>
<dbReference type="UniPathway" id="UPA00148">
    <property type="reaction ID" value="UER00227"/>
</dbReference>
<dbReference type="GO" id="GO:0043780">
    <property type="term" value="F:cobalt-precorrin-5B C1-methyltransferase activity"/>
    <property type="evidence" value="ECO:0007669"/>
    <property type="project" value="RHEA"/>
</dbReference>
<dbReference type="GO" id="GO:0019251">
    <property type="term" value="P:anaerobic cobalamin biosynthetic process"/>
    <property type="evidence" value="ECO:0007669"/>
    <property type="project" value="UniProtKB-UniRule"/>
</dbReference>
<dbReference type="GO" id="GO:0032259">
    <property type="term" value="P:methylation"/>
    <property type="evidence" value="ECO:0007669"/>
    <property type="project" value="UniProtKB-KW"/>
</dbReference>
<dbReference type="Gene3D" id="3.30.2110.10">
    <property type="entry name" value="CbiD-like"/>
    <property type="match status" value="1"/>
</dbReference>
<dbReference type="HAMAP" id="MF_00787">
    <property type="entry name" value="CbiD"/>
    <property type="match status" value="1"/>
</dbReference>
<dbReference type="InterPro" id="IPR002748">
    <property type="entry name" value="CbiD"/>
</dbReference>
<dbReference type="InterPro" id="IPR036074">
    <property type="entry name" value="CbiD_sf"/>
</dbReference>
<dbReference type="NCBIfam" id="TIGR00312">
    <property type="entry name" value="cbiD"/>
    <property type="match status" value="1"/>
</dbReference>
<dbReference type="NCBIfam" id="NF000849">
    <property type="entry name" value="PRK00075.1-1"/>
    <property type="match status" value="1"/>
</dbReference>
<dbReference type="PANTHER" id="PTHR35863">
    <property type="entry name" value="COBALT-PRECORRIN-5B C(1)-METHYLTRANSFERASE"/>
    <property type="match status" value="1"/>
</dbReference>
<dbReference type="PANTHER" id="PTHR35863:SF1">
    <property type="entry name" value="COBALT-PRECORRIN-5B C(1)-METHYLTRANSFERASE"/>
    <property type="match status" value="1"/>
</dbReference>
<dbReference type="Pfam" id="PF01888">
    <property type="entry name" value="CbiD"/>
    <property type="match status" value="1"/>
</dbReference>
<dbReference type="PIRSF" id="PIRSF026782">
    <property type="entry name" value="CbiD"/>
    <property type="match status" value="1"/>
</dbReference>
<dbReference type="SUPFAM" id="SSF111342">
    <property type="entry name" value="CbiD-like"/>
    <property type="match status" value="1"/>
</dbReference>